<proteinExistence type="inferred from homology"/>
<reference key="1">
    <citation type="journal article" date="2004" name="Nucleic Acids Res.">
        <title>The genome sequence of Bacillus cereus ATCC 10987 reveals metabolic adaptations and a large plasmid related to Bacillus anthracis pXO1.</title>
        <authorList>
            <person name="Rasko D.A."/>
            <person name="Ravel J."/>
            <person name="Oekstad O.A."/>
            <person name="Helgason E."/>
            <person name="Cer R.Z."/>
            <person name="Jiang L."/>
            <person name="Shores K.A."/>
            <person name="Fouts D.E."/>
            <person name="Tourasse N.J."/>
            <person name="Angiuoli S.V."/>
            <person name="Kolonay J.F."/>
            <person name="Nelson W.C."/>
            <person name="Kolstoe A.-B."/>
            <person name="Fraser C.M."/>
            <person name="Read T.D."/>
        </authorList>
    </citation>
    <scope>NUCLEOTIDE SEQUENCE [LARGE SCALE GENOMIC DNA]</scope>
    <source>
        <strain>ATCC 10987 / NRS 248</strain>
    </source>
</reference>
<feature type="chain" id="PRO_0000135623" description="Pyridoxal 5'-phosphate synthase subunit PdxT">
    <location>
        <begin position="1"/>
        <end position="196"/>
    </location>
</feature>
<feature type="active site" description="Nucleophile" evidence="1">
    <location>
        <position position="79"/>
    </location>
</feature>
<feature type="active site" description="Charge relay system" evidence="1">
    <location>
        <position position="170"/>
    </location>
</feature>
<feature type="active site" description="Charge relay system" evidence="1">
    <location>
        <position position="172"/>
    </location>
</feature>
<feature type="binding site" evidence="1">
    <location>
        <begin position="47"/>
        <end position="49"/>
    </location>
    <ligand>
        <name>L-glutamine</name>
        <dbReference type="ChEBI" id="CHEBI:58359"/>
    </ligand>
</feature>
<feature type="binding site" evidence="1">
    <location>
        <position position="106"/>
    </location>
    <ligand>
        <name>L-glutamine</name>
        <dbReference type="ChEBI" id="CHEBI:58359"/>
    </ligand>
</feature>
<feature type="binding site" evidence="1">
    <location>
        <begin position="134"/>
        <end position="135"/>
    </location>
    <ligand>
        <name>L-glutamine</name>
        <dbReference type="ChEBI" id="CHEBI:58359"/>
    </ligand>
</feature>
<evidence type="ECO:0000255" key="1">
    <source>
        <dbReference type="HAMAP-Rule" id="MF_01615"/>
    </source>
</evidence>
<dbReference type="EC" id="4.3.3.6" evidence="1"/>
<dbReference type="EC" id="3.5.1.2" evidence="1"/>
<dbReference type="EMBL" id="AE017194">
    <property type="protein sequence ID" value="AAS38948.1"/>
    <property type="molecule type" value="Genomic_DNA"/>
</dbReference>
<dbReference type="SMR" id="Q73FJ4"/>
<dbReference type="KEGG" id="bca:BCE_0012"/>
<dbReference type="HOGENOM" id="CLU_069674_2_0_9"/>
<dbReference type="UniPathway" id="UPA00245"/>
<dbReference type="Proteomes" id="UP000002527">
    <property type="component" value="Chromosome"/>
</dbReference>
<dbReference type="GO" id="GO:0005829">
    <property type="term" value="C:cytosol"/>
    <property type="evidence" value="ECO:0007669"/>
    <property type="project" value="TreeGrafter"/>
</dbReference>
<dbReference type="GO" id="GO:1903600">
    <property type="term" value="C:glutaminase complex"/>
    <property type="evidence" value="ECO:0007669"/>
    <property type="project" value="TreeGrafter"/>
</dbReference>
<dbReference type="GO" id="GO:0004359">
    <property type="term" value="F:glutaminase activity"/>
    <property type="evidence" value="ECO:0007669"/>
    <property type="project" value="UniProtKB-UniRule"/>
</dbReference>
<dbReference type="GO" id="GO:0036381">
    <property type="term" value="F:pyridoxal 5'-phosphate synthase (glutamine hydrolysing) activity"/>
    <property type="evidence" value="ECO:0007669"/>
    <property type="project" value="UniProtKB-UniRule"/>
</dbReference>
<dbReference type="GO" id="GO:0006543">
    <property type="term" value="P:glutamine catabolic process"/>
    <property type="evidence" value="ECO:0007669"/>
    <property type="project" value="UniProtKB-UniRule"/>
</dbReference>
<dbReference type="GO" id="GO:0042823">
    <property type="term" value="P:pyridoxal phosphate biosynthetic process"/>
    <property type="evidence" value="ECO:0007669"/>
    <property type="project" value="UniProtKB-UniRule"/>
</dbReference>
<dbReference type="GO" id="GO:0008614">
    <property type="term" value="P:pyridoxine metabolic process"/>
    <property type="evidence" value="ECO:0007669"/>
    <property type="project" value="TreeGrafter"/>
</dbReference>
<dbReference type="CDD" id="cd01749">
    <property type="entry name" value="GATase1_PB"/>
    <property type="match status" value="1"/>
</dbReference>
<dbReference type="FunFam" id="3.40.50.880:FF:000010">
    <property type="entry name" value="uncharacterized protein LOC100176842 isoform X2"/>
    <property type="match status" value="1"/>
</dbReference>
<dbReference type="Gene3D" id="3.40.50.880">
    <property type="match status" value="1"/>
</dbReference>
<dbReference type="HAMAP" id="MF_01615">
    <property type="entry name" value="PdxT"/>
    <property type="match status" value="1"/>
</dbReference>
<dbReference type="InterPro" id="IPR029062">
    <property type="entry name" value="Class_I_gatase-like"/>
</dbReference>
<dbReference type="InterPro" id="IPR002161">
    <property type="entry name" value="PdxT/SNO"/>
</dbReference>
<dbReference type="InterPro" id="IPR021196">
    <property type="entry name" value="PdxT/SNO_CS"/>
</dbReference>
<dbReference type="NCBIfam" id="TIGR03800">
    <property type="entry name" value="PLP_synth_Pdx2"/>
    <property type="match status" value="1"/>
</dbReference>
<dbReference type="PANTHER" id="PTHR31559">
    <property type="entry name" value="PYRIDOXAL 5'-PHOSPHATE SYNTHASE SUBUNIT SNO"/>
    <property type="match status" value="1"/>
</dbReference>
<dbReference type="PANTHER" id="PTHR31559:SF0">
    <property type="entry name" value="PYRIDOXAL 5'-PHOSPHATE SYNTHASE SUBUNIT SNO1-RELATED"/>
    <property type="match status" value="1"/>
</dbReference>
<dbReference type="Pfam" id="PF01174">
    <property type="entry name" value="SNO"/>
    <property type="match status" value="1"/>
</dbReference>
<dbReference type="PIRSF" id="PIRSF005639">
    <property type="entry name" value="Glut_amidoT_SNO"/>
    <property type="match status" value="1"/>
</dbReference>
<dbReference type="SUPFAM" id="SSF52317">
    <property type="entry name" value="Class I glutamine amidotransferase-like"/>
    <property type="match status" value="1"/>
</dbReference>
<dbReference type="PROSITE" id="PS01236">
    <property type="entry name" value="PDXT_SNO_1"/>
    <property type="match status" value="1"/>
</dbReference>
<dbReference type="PROSITE" id="PS51130">
    <property type="entry name" value="PDXT_SNO_2"/>
    <property type="match status" value="1"/>
</dbReference>
<keyword id="KW-0315">Glutamine amidotransferase</keyword>
<keyword id="KW-0378">Hydrolase</keyword>
<keyword id="KW-0456">Lyase</keyword>
<keyword id="KW-0663">Pyridoxal phosphate</keyword>
<comment type="function">
    <text evidence="1">Catalyzes the hydrolysis of glutamine to glutamate and ammonia as part of the biosynthesis of pyridoxal 5'-phosphate. The resulting ammonia molecule is channeled to the active site of PdxS.</text>
</comment>
<comment type="catalytic activity">
    <reaction evidence="1">
        <text>aldehydo-D-ribose 5-phosphate + D-glyceraldehyde 3-phosphate + L-glutamine = pyridoxal 5'-phosphate + L-glutamate + phosphate + 3 H2O + H(+)</text>
        <dbReference type="Rhea" id="RHEA:31507"/>
        <dbReference type="ChEBI" id="CHEBI:15377"/>
        <dbReference type="ChEBI" id="CHEBI:15378"/>
        <dbReference type="ChEBI" id="CHEBI:29985"/>
        <dbReference type="ChEBI" id="CHEBI:43474"/>
        <dbReference type="ChEBI" id="CHEBI:58273"/>
        <dbReference type="ChEBI" id="CHEBI:58359"/>
        <dbReference type="ChEBI" id="CHEBI:59776"/>
        <dbReference type="ChEBI" id="CHEBI:597326"/>
        <dbReference type="EC" id="4.3.3.6"/>
    </reaction>
</comment>
<comment type="catalytic activity">
    <reaction evidence="1">
        <text>L-glutamine + H2O = L-glutamate + NH4(+)</text>
        <dbReference type="Rhea" id="RHEA:15889"/>
        <dbReference type="ChEBI" id="CHEBI:15377"/>
        <dbReference type="ChEBI" id="CHEBI:28938"/>
        <dbReference type="ChEBI" id="CHEBI:29985"/>
        <dbReference type="ChEBI" id="CHEBI:58359"/>
        <dbReference type="EC" id="3.5.1.2"/>
    </reaction>
</comment>
<comment type="pathway">
    <text evidence="1">Cofactor biosynthesis; pyridoxal 5'-phosphate biosynthesis.</text>
</comment>
<comment type="subunit">
    <text evidence="1">In the presence of PdxS, forms a dodecamer of heterodimers. Only shows activity in the heterodimer.</text>
</comment>
<comment type="similarity">
    <text evidence="1">Belongs to the glutaminase PdxT/SNO family.</text>
</comment>
<gene>
    <name evidence="1" type="primary">pdxT</name>
    <name type="ordered locus">BCE_0012</name>
</gene>
<organism>
    <name type="scientific">Bacillus cereus (strain ATCC 10987 / NRS 248)</name>
    <dbReference type="NCBI Taxonomy" id="222523"/>
    <lineage>
        <taxon>Bacteria</taxon>
        <taxon>Bacillati</taxon>
        <taxon>Bacillota</taxon>
        <taxon>Bacilli</taxon>
        <taxon>Bacillales</taxon>
        <taxon>Bacillaceae</taxon>
        <taxon>Bacillus</taxon>
        <taxon>Bacillus cereus group</taxon>
    </lineage>
</organism>
<sequence length="196" mass="21414">MVKIGVLGLQGAVREHVKSVEASGAEAVVVKRIEQLEEIDGLILPGGESTTMRRLIDKYAFMEPLRTFAKSGKPMFGTCAGMILLAKTLIGYDEAHIGAMDITVERNAFGRQKDSFEAALSIKGVGEDFVGVFIRAPYVVNVADNVEVLSTHGDRMVAVRQGPFLAASFHPELTDDHRVTAYFVEMVKEAKMKKVV</sequence>
<accession>Q73FJ4</accession>
<protein>
    <recommendedName>
        <fullName evidence="1">Pyridoxal 5'-phosphate synthase subunit PdxT</fullName>
        <ecNumber evidence="1">4.3.3.6</ecNumber>
    </recommendedName>
    <alternativeName>
        <fullName evidence="1">Pdx2</fullName>
    </alternativeName>
    <alternativeName>
        <fullName evidence="1">Pyridoxal 5'-phosphate synthase glutaminase subunit</fullName>
        <ecNumber evidence="1">3.5.1.2</ecNumber>
    </alternativeName>
</protein>
<name>PDXT_BACC1</name>